<reference key="1">
    <citation type="journal article" date="2003" name="Mol. Microbiol.">
        <title>An integrated analysis of the genome of the hyperthermophilic archaeon Pyrococcus abyssi.</title>
        <authorList>
            <person name="Cohen G.N."/>
            <person name="Barbe V."/>
            <person name="Flament D."/>
            <person name="Galperin M."/>
            <person name="Heilig R."/>
            <person name="Lecompte O."/>
            <person name="Poch O."/>
            <person name="Prieur D."/>
            <person name="Querellou J."/>
            <person name="Ripp R."/>
            <person name="Thierry J.-C."/>
            <person name="Van der Oost J."/>
            <person name="Weissenbach J."/>
            <person name="Zivanovic Y."/>
            <person name="Forterre P."/>
        </authorList>
    </citation>
    <scope>NUCLEOTIDE SEQUENCE [LARGE SCALE GENOMIC DNA]</scope>
    <source>
        <strain>GE5 / Orsay</strain>
    </source>
</reference>
<reference key="2">
    <citation type="journal article" date="2012" name="Curr. Microbiol.">
        <title>Re-annotation of two hyperthermophilic archaea Pyrococcus abyssi GE5 and Pyrococcus furiosus DSM 3638.</title>
        <authorList>
            <person name="Gao J."/>
            <person name="Wang J."/>
        </authorList>
    </citation>
    <scope>GENOME REANNOTATION</scope>
    <source>
        <strain>GE5 / Orsay</strain>
    </source>
</reference>
<reference key="3">
    <citation type="journal article" date="2010" name="BMC Res. Notes">
        <title>Expression, purification and structural analysis of the Pyrococcus abyssi RNA binding protein PAB1135.</title>
        <authorList>
            <person name="Luz J.S."/>
            <person name="Barbosa J.A."/>
            <person name="Ramos C.R."/>
            <person name="Oliveira C.C."/>
        </authorList>
    </citation>
    <scope>RNA-BINDING</scope>
    <scope>SUBUNIT</scope>
    <source>
        <strain>GE5 / Orsay</strain>
    </source>
</reference>
<dbReference type="EMBL" id="AJ248288">
    <property type="protein sequence ID" value="CAB50635.1"/>
    <property type="molecule type" value="Genomic_DNA"/>
</dbReference>
<dbReference type="EMBL" id="HE613800">
    <property type="protein sequence ID" value="CCE71203.1"/>
    <property type="molecule type" value="Genomic_DNA"/>
</dbReference>
<dbReference type="PIR" id="E75024">
    <property type="entry name" value="E75024"/>
</dbReference>
<dbReference type="RefSeq" id="WP_010868849.1">
    <property type="nucleotide sequence ID" value="NC_000868.1"/>
</dbReference>
<dbReference type="SMR" id="Q9UXX8"/>
<dbReference type="STRING" id="272844.PAB1135"/>
<dbReference type="KEGG" id="pab:PAB1135"/>
<dbReference type="PATRIC" id="fig|272844.11.peg.1848"/>
<dbReference type="eggNOG" id="arCOG01042">
    <property type="taxonomic scope" value="Archaea"/>
</dbReference>
<dbReference type="HOGENOM" id="CLU_131306_1_1_2"/>
<dbReference type="OrthoDB" id="10874at2157"/>
<dbReference type="PhylomeDB" id="Q9UXX8"/>
<dbReference type="Proteomes" id="UP000000810">
    <property type="component" value="Chromosome"/>
</dbReference>
<dbReference type="Proteomes" id="UP000009139">
    <property type="component" value="Chromosome"/>
</dbReference>
<dbReference type="GO" id="GO:0003723">
    <property type="term" value="F:RNA binding"/>
    <property type="evidence" value="ECO:0007669"/>
    <property type="project" value="UniProtKB-KW"/>
</dbReference>
<dbReference type="Gene3D" id="3.30.1440.10">
    <property type="match status" value="1"/>
</dbReference>
<dbReference type="InterPro" id="IPR002739">
    <property type="entry name" value="PAB1135-like"/>
</dbReference>
<dbReference type="InterPro" id="IPR022803">
    <property type="entry name" value="Ribosomal_uL5_dom_sf"/>
</dbReference>
<dbReference type="NCBIfam" id="NF011142">
    <property type="entry name" value="PRK14555.1-3"/>
    <property type="match status" value="1"/>
</dbReference>
<dbReference type="PANTHER" id="PTHR38816:SF1">
    <property type="entry name" value="EXOSOME SUBUNIT"/>
    <property type="match status" value="1"/>
</dbReference>
<dbReference type="PANTHER" id="PTHR38816">
    <property type="entry name" value="EXOSOME SUBUNIT, DUF54 FAMILY-RELATED"/>
    <property type="match status" value="1"/>
</dbReference>
<dbReference type="Pfam" id="PF01877">
    <property type="entry name" value="RNA_binding"/>
    <property type="match status" value="1"/>
</dbReference>
<dbReference type="SUPFAM" id="SSF55282">
    <property type="entry name" value="RL5-like"/>
    <property type="match status" value="1"/>
</dbReference>
<organism>
    <name type="scientific">Pyrococcus abyssi (strain GE5 / Orsay)</name>
    <dbReference type="NCBI Taxonomy" id="272844"/>
    <lineage>
        <taxon>Archaea</taxon>
        <taxon>Methanobacteriati</taxon>
        <taxon>Methanobacteriota</taxon>
        <taxon>Thermococci</taxon>
        <taxon>Thermococcales</taxon>
        <taxon>Thermococcaceae</taxon>
        <taxon>Pyrococcus</taxon>
    </lineage>
</organism>
<proteinExistence type="evidence at protein level"/>
<keyword id="KW-0694">RNA-binding</keyword>
<comment type="function">
    <text evidence="1">In vitro, binds efficiently double-stranded RNAs in a non-sequence specific manner.</text>
</comment>
<comment type="subunit">
    <text evidence="1">Homodimer in solution.</text>
</comment>
<sequence length="154" mass="17956">MAGKLQAHNIRIRTFIHATEDPEKVLEALETLFPEEISPKDVEFEVIETEGYFGNPILVVDAEIKHSRNIRKFLENLRGLLSKEDRKYLWEHAEEKVDETGTFYIRFDKQKAYLGEVKVSEGEDVIHVRIKVKAFPMKKEAVVKAVREWLEGED</sequence>
<protein>
    <recommendedName>
        <fullName evidence="2">RNA-binding protein PAB1135</fullName>
    </recommendedName>
</protein>
<gene>
    <name type="ordered locus">PYRAB17300</name>
    <name evidence="3" type="ORF">PAB1135</name>
</gene>
<accession>Q9UXX8</accession>
<feature type="chain" id="PRO_0000431382" description="RNA-binding protein PAB1135">
    <location>
        <begin position="1"/>
        <end position="154"/>
    </location>
</feature>
<name>RNABP_PYRAB</name>
<evidence type="ECO:0000269" key="1">
    <source>
    </source>
</evidence>
<evidence type="ECO:0000303" key="2">
    <source>
    </source>
</evidence>
<evidence type="ECO:0000312" key="3">
    <source>
        <dbReference type="EMBL" id="CAB50635.1"/>
    </source>
</evidence>